<feature type="chain" id="PRO_1000020936" description="Protease HtpX">
    <location>
        <begin position="1"/>
        <end position="287"/>
    </location>
</feature>
<feature type="transmembrane region" description="Helical" evidence="1">
    <location>
        <begin position="4"/>
        <end position="24"/>
    </location>
</feature>
<feature type="transmembrane region" description="Helical" evidence="1">
    <location>
        <begin position="33"/>
        <end position="53"/>
    </location>
</feature>
<feature type="transmembrane region" description="Helical" evidence="1">
    <location>
        <begin position="154"/>
        <end position="174"/>
    </location>
</feature>
<feature type="transmembrane region" description="Helical" evidence="1">
    <location>
        <begin position="195"/>
        <end position="215"/>
    </location>
</feature>
<feature type="active site" evidence="1">
    <location>
        <position position="140"/>
    </location>
</feature>
<feature type="binding site" evidence="1">
    <location>
        <position position="139"/>
    </location>
    <ligand>
        <name>Zn(2+)</name>
        <dbReference type="ChEBI" id="CHEBI:29105"/>
        <note>catalytic</note>
    </ligand>
</feature>
<feature type="binding site" evidence="1">
    <location>
        <position position="143"/>
    </location>
    <ligand>
        <name>Zn(2+)</name>
        <dbReference type="ChEBI" id="CHEBI:29105"/>
        <note>catalytic</note>
    </ligand>
</feature>
<feature type="binding site" evidence="1">
    <location>
        <position position="220"/>
    </location>
    <ligand>
        <name>Zn(2+)</name>
        <dbReference type="ChEBI" id="CHEBI:29105"/>
        <note>catalytic</note>
    </ligand>
</feature>
<sequence length="287" mass="30789">MKRIFLLIATNMAILLVASIVMSILGVNTSTMGGLLVFAAIFGFGGAFISLAISKWMAKKTMGCEVITTPRDNMERWLVDTVARQAEQAGIKMPEVAIYQSPELNAFATGPSKDNSLVAVSSGLLYGMTQDEIEGVLAHEVSHVANGDMVTLTLIQGVVNTFVIFAARVVASIIDNFVASNDEEGEGLGMFAYMAVVFVLDMLFGILASMIVAYFSRVREFKADAGGAQLAGKHKMIAALDRLRQGPETGAMPAQMAAFGINGKKSMAELMMSHPPLEKRIEALRAQ</sequence>
<proteinExistence type="inferred from homology"/>
<keyword id="KW-0997">Cell inner membrane</keyword>
<keyword id="KW-1003">Cell membrane</keyword>
<keyword id="KW-0378">Hydrolase</keyword>
<keyword id="KW-0472">Membrane</keyword>
<keyword id="KW-0479">Metal-binding</keyword>
<keyword id="KW-0482">Metalloprotease</keyword>
<keyword id="KW-0645">Protease</keyword>
<keyword id="KW-1185">Reference proteome</keyword>
<keyword id="KW-0812">Transmembrane</keyword>
<keyword id="KW-1133">Transmembrane helix</keyword>
<keyword id="KW-0862">Zinc</keyword>
<organism>
    <name type="scientific">Shewanella loihica (strain ATCC BAA-1088 / PV-4)</name>
    <dbReference type="NCBI Taxonomy" id="323850"/>
    <lineage>
        <taxon>Bacteria</taxon>
        <taxon>Pseudomonadati</taxon>
        <taxon>Pseudomonadota</taxon>
        <taxon>Gammaproteobacteria</taxon>
        <taxon>Alteromonadales</taxon>
        <taxon>Shewanellaceae</taxon>
        <taxon>Shewanella</taxon>
    </lineage>
</organism>
<comment type="cofactor">
    <cofactor evidence="1">
        <name>Zn(2+)</name>
        <dbReference type="ChEBI" id="CHEBI:29105"/>
    </cofactor>
    <text evidence="1">Binds 1 zinc ion per subunit.</text>
</comment>
<comment type="subcellular location">
    <subcellularLocation>
        <location evidence="1">Cell inner membrane</location>
        <topology evidence="1">Multi-pass membrane protein</topology>
    </subcellularLocation>
</comment>
<comment type="similarity">
    <text evidence="1">Belongs to the peptidase M48B family.</text>
</comment>
<accession>A3QDP2</accession>
<protein>
    <recommendedName>
        <fullName evidence="1">Protease HtpX</fullName>
        <ecNumber evidence="1">3.4.24.-</ecNumber>
    </recommendedName>
    <alternativeName>
        <fullName evidence="1">Heat shock protein HtpX</fullName>
    </alternativeName>
</protein>
<dbReference type="EC" id="3.4.24.-" evidence="1"/>
<dbReference type="EMBL" id="CP000606">
    <property type="protein sequence ID" value="ABO23590.1"/>
    <property type="molecule type" value="Genomic_DNA"/>
</dbReference>
<dbReference type="RefSeq" id="WP_011865522.1">
    <property type="nucleotide sequence ID" value="NC_009092.1"/>
</dbReference>
<dbReference type="STRING" id="323850.Shew_1723"/>
<dbReference type="MEROPS" id="M48.002"/>
<dbReference type="KEGG" id="slo:Shew_1723"/>
<dbReference type="eggNOG" id="COG0501">
    <property type="taxonomic scope" value="Bacteria"/>
</dbReference>
<dbReference type="HOGENOM" id="CLU_042266_1_0_6"/>
<dbReference type="OrthoDB" id="15218at2"/>
<dbReference type="Proteomes" id="UP000001558">
    <property type="component" value="Chromosome"/>
</dbReference>
<dbReference type="GO" id="GO:0005886">
    <property type="term" value="C:plasma membrane"/>
    <property type="evidence" value="ECO:0007669"/>
    <property type="project" value="UniProtKB-SubCell"/>
</dbReference>
<dbReference type="GO" id="GO:0004222">
    <property type="term" value="F:metalloendopeptidase activity"/>
    <property type="evidence" value="ECO:0007669"/>
    <property type="project" value="UniProtKB-UniRule"/>
</dbReference>
<dbReference type="GO" id="GO:0008270">
    <property type="term" value="F:zinc ion binding"/>
    <property type="evidence" value="ECO:0007669"/>
    <property type="project" value="UniProtKB-UniRule"/>
</dbReference>
<dbReference type="GO" id="GO:0006508">
    <property type="term" value="P:proteolysis"/>
    <property type="evidence" value="ECO:0007669"/>
    <property type="project" value="UniProtKB-KW"/>
</dbReference>
<dbReference type="CDD" id="cd07335">
    <property type="entry name" value="M48B_HtpX_like"/>
    <property type="match status" value="1"/>
</dbReference>
<dbReference type="FunFam" id="3.30.2010.10:FF:000001">
    <property type="entry name" value="Protease HtpX"/>
    <property type="match status" value="1"/>
</dbReference>
<dbReference type="Gene3D" id="3.30.2010.10">
    <property type="entry name" value="Metalloproteases ('zincins'), catalytic domain"/>
    <property type="match status" value="1"/>
</dbReference>
<dbReference type="HAMAP" id="MF_00188">
    <property type="entry name" value="Pept_M48_protease_HtpX"/>
    <property type="match status" value="1"/>
</dbReference>
<dbReference type="InterPro" id="IPR050083">
    <property type="entry name" value="HtpX_protease"/>
</dbReference>
<dbReference type="InterPro" id="IPR022919">
    <property type="entry name" value="Pept_M48_protease_HtpX"/>
</dbReference>
<dbReference type="InterPro" id="IPR001915">
    <property type="entry name" value="Peptidase_M48"/>
</dbReference>
<dbReference type="NCBIfam" id="NF003965">
    <property type="entry name" value="PRK05457.1"/>
    <property type="match status" value="1"/>
</dbReference>
<dbReference type="PANTHER" id="PTHR43221">
    <property type="entry name" value="PROTEASE HTPX"/>
    <property type="match status" value="1"/>
</dbReference>
<dbReference type="PANTHER" id="PTHR43221:SF1">
    <property type="entry name" value="PROTEASE HTPX"/>
    <property type="match status" value="1"/>
</dbReference>
<dbReference type="Pfam" id="PF01435">
    <property type="entry name" value="Peptidase_M48"/>
    <property type="match status" value="1"/>
</dbReference>
<name>HTPX_SHELP</name>
<reference key="1">
    <citation type="submission" date="2007-03" db="EMBL/GenBank/DDBJ databases">
        <title>Complete sequence of Shewanella loihica PV-4.</title>
        <authorList>
            <consortium name="US DOE Joint Genome Institute"/>
            <person name="Copeland A."/>
            <person name="Lucas S."/>
            <person name="Lapidus A."/>
            <person name="Barry K."/>
            <person name="Detter J.C."/>
            <person name="Glavina del Rio T."/>
            <person name="Hammon N."/>
            <person name="Israni S."/>
            <person name="Dalin E."/>
            <person name="Tice H."/>
            <person name="Pitluck S."/>
            <person name="Chain P."/>
            <person name="Malfatti S."/>
            <person name="Shin M."/>
            <person name="Vergez L."/>
            <person name="Schmutz J."/>
            <person name="Larimer F."/>
            <person name="Land M."/>
            <person name="Hauser L."/>
            <person name="Kyrpides N."/>
            <person name="Mikhailova N."/>
            <person name="Romine M.F."/>
            <person name="Serres G."/>
            <person name="Fredrickson J."/>
            <person name="Tiedje J."/>
            <person name="Richardson P."/>
        </authorList>
    </citation>
    <scope>NUCLEOTIDE SEQUENCE [LARGE SCALE GENOMIC DNA]</scope>
    <source>
        <strain>ATCC BAA-1088 / PV-4</strain>
    </source>
</reference>
<gene>
    <name evidence="1" type="primary">htpX</name>
    <name type="ordered locus">Shew_1723</name>
</gene>
<evidence type="ECO:0000255" key="1">
    <source>
        <dbReference type="HAMAP-Rule" id="MF_00188"/>
    </source>
</evidence>